<name>AGL42_ARATH</name>
<feature type="chain" id="PRO_0000436027" description="MADS-box protein AGL42">
    <location>
        <begin position="1"/>
        <end position="210"/>
    </location>
</feature>
<feature type="domain" description="MADS-box" evidence="1">
    <location>
        <begin position="1"/>
        <end position="61"/>
    </location>
</feature>
<feature type="domain" description="K-box" evidence="2">
    <location>
        <begin position="87"/>
        <end position="177"/>
    </location>
</feature>
<feature type="splice variant" id="VSP_058213" description="In isoform 2.">
    <location>
        <begin position="142"/>
        <end position="155"/>
    </location>
</feature>
<organism>
    <name type="scientific">Arabidopsis thaliana</name>
    <name type="common">Mouse-ear cress</name>
    <dbReference type="NCBI Taxonomy" id="3702"/>
    <lineage>
        <taxon>Eukaryota</taxon>
        <taxon>Viridiplantae</taxon>
        <taxon>Streptophyta</taxon>
        <taxon>Embryophyta</taxon>
        <taxon>Tracheophyta</taxon>
        <taxon>Spermatophyta</taxon>
        <taxon>Magnoliopsida</taxon>
        <taxon>eudicotyledons</taxon>
        <taxon>Gunneridae</taxon>
        <taxon>Pentapetalae</taxon>
        <taxon>rosids</taxon>
        <taxon>malvids</taxon>
        <taxon>Brassicales</taxon>
        <taxon>Brassicaceae</taxon>
        <taxon>Camelineae</taxon>
        <taxon>Arabidopsis</taxon>
    </lineage>
</organism>
<protein>
    <recommendedName>
        <fullName>MADS-box protein AGL42</fullName>
    </recommendedName>
    <alternativeName>
        <fullName>Protein AGAMOUS-LIKE 42</fullName>
    </alternativeName>
    <alternativeName>
        <fullName evidence="6">Protein FOREVER YOUNG FLOWER</fullName>
    </alternativeName>
</protein>
<sequence length="210" mass="24673">MVRGKIEMKKIENATSRQVTFSKRRNGLLKKAYELSVLCDAQLSLIIFSQRGRLYEFSSSDMQKTIERYRKYTKDHETSNHDSQIHLQQLKQEASHMITKIELLEFHKRKLLGQGIASCSLEELQEIDSQLQRSLGKVRERKAQLFKEQLEKLKAKEKQLLEENVKLHQKNVINPWRGSSTDQQQEKYKVIDLNLEVETDLFIGLPNRNC</sequence>
<evidence type="ECO:0000255" key="1">
    <source>
        <dbReference type="PROSITE-ProRule" id="PRU00251"/>
    </source>
</evidence>
<evidence type="ECO:0000255" key="2">
    <source>
        <dbReference type="PROSITE-ProRule" id="PRU00629"/>
    </source>
</evidence>
<evidence type="ECO:0000269" key="3">
    <source>
    </source>
</evidence>
<evidence type="ECO:0000269" key="4">
    <source>
    </source>
</evidence>
<evidence type="ECO:0000269" key="5">
    <source>
    </source>
</evidence>
<evidence type="ECO:0000303" key="6">
    <source>
    </source>
</evidence>
<evidence type="ECO:0000312" key="7">
    <source>
        <dbReference type="Araport" id="AT5G62165"/>
    </source>
</evidence>
<evidence type="ECO:0000312" key="8">
    <source>
        <dbReference type="EMBL" id="BAB10179.1"/>
    </source>
</evidence>
<keyword id="KW-0025">Alternative splicing</keyword>
<keyword id="KW-0217">Developmental protein</keyword>
<keyword id="KW-0221">Differentiation</keyword>
<keyword id="KW-0238">DNA-binding</keyword>
<keyword id="KW-0287">Flowering</keyword>
<keyword id="KW-0539">Nucleus</keyword>
<keyword id="KW-1185">Reference proteome</keyword>
<keyword id="KW-0804">Transcription</keyword>
<keyword id="KW-0805">Transcription regulation</keyword>
<dbReference type="EMBL" id="AY141213">
    <property type="protein sequence ID" value="AAN52777.1"/>
    <property type="molecule type" value="mRNA"/>
</dbReference>
<dbReference type="EMBL" id="AB016880">
    <property type="protein sequence ID" value="BAB10179.1"/>
    <property type="molecule type" value="Genomic_DNA"/>
</dbReference>
<dbReference type="EMBL" id="CP002688">
    <property type="protein sequence ID" value="AED97572.1"/>
    <property type="molecule type" value="Genomic_DNA"/>
</dbReference>
<dbReference type="EMBL" id="CP002688">
    <property type="protein sequence ID" value="AED97573.1"/>
    <property type="molecule type" value="Genomic_DNA"/>
</dbReference>
<dbReference type="EMBL" id="CP002688">
    <property type="protein sequence ID" value="AED97574.1"/>
    <property type="molecule type" value="Genomic_DNA"/>
</dbReference>
<dbReference type="EMBL" id="CP002688">
    <property type="protein sequence ID" value="AED97575.1"/>
    <property type="molecule type" value="Genomic_DNA"/>
</dbReference>
<dbReference type="EMBL" id="CP002688">
    <property type="protein sequence ID" value="ANM68468.1"/>
    <property type="molecule type" value="Genomic_DNA"/>
</dbReference>
<dbReference type="EMBL" id="AY054220">
    <property type="protein sequence ID" value="AAL06880.1"/>
    <property type="molecule type" value="mRNA"/>
</dbReference>
<dbReference type="EMBL" id="AY065206">
    <property type="protein sequence ID" value="AAL38682.1"/>
    <property type="molecule type" value="mRNA"/>
</dbReference>
<dbReference type="EMBL" id="AY066035">
    <property type="protein sequence ID" value="AAL47402.1"/>
    <property type="molecule type" value="mRNA"/>
</dbReference>
<dbReference type="EMBL" id="AY096509">
    <property type="protein sequence ID" value="AAM20159.1"/>
    <property type="molecule type" value="mRNA"/>
</dbReference>
<dbReference type="EMBL" id="AK318667">
    <property type="protein sequence ID" value="BAH56782.1"/>
    <property type="molecule type" value="mRNA"/>
</dbReference>
<dbReference type="RefSeq" id="NP_001032123.1">
    <molecule id="Q9FIS1-1"/>
    <property type="nucleotide sequence ID" value="NM_001037046.2"/>
</dbReference>
<dbReference type="RefSeq" id="NP_001190593.1">
    <molecule id="Q9FIS1-2"/>
    <property type="nucleotide sequence ID" value="NM_001203664.2"/>
</dbReference>
<dbReference type="RefSeq" id="NP_001330222.1">
    <molecule id="Q9FIS1-2"/>
    <property type="nucleotide sequence ID" value="NM_001345528.1"/>
</dbReference>
<dbReference type="RefSeq" id="NP_568952.1">
    <molecule id="Q9FIS1-1"/>
    <property type="nucleotide sequence ID" value="NM_125610.4"/>
</dbReference>
<dbReference type="RefSeq" id="NP_851247.1">
    <molecule id="Q9FIS1-1"/>
    <property type="nucleotide sequence ID" value="NM_180916.1"/>
</dbReference>
<dbReference type="SMR" id="Q9FIS1"/>
<dbReference type="FunCoup" id="Q9FIS1">
    <property type="interactions" value="27"/>
</dbReference>
<dbReference type="IntAct" id="Q9FIS1">
    <property type="interactions" value="15"/>
</dbReference>
<dbReference type="STRING" id="3702.Q9FIS1"/>
<dbReference type="PaxDb" id="3702-AT5G62165.1"/>
<dbReference type="EnsemblPlants" id="AT5G62165.1">
    <molecule id="Q9FIS1-1"/>
    <property type="protein sequence ID" value="AT5G62165.1"/>
    <property type="gene ID" value="AT5G62165"/>
</dbReference>
<dbReference type="EnsemblPlants" id="AT5G62165.10">
    <molecule id="Q9FIS1-2"/>
    <property type="protein sequence ID" value="AT5G62165.10"/>
    <property type="gene ID" value="AT5G62165"/>
</dbReference>
<dbReference type="EnsemblPlants" id="AT5G62165.2">
    <molecule id="Q9FIS1-1"/>
    <property type="protein sequence ID" value="AT5G62165.2"/>
    <property type="gene ID" value="AT5G62165"/>
</dbReference>
<dbReference type="EnsemblPlants" id="AT5G62165.3">
    <molecule id="Q9FIS1-1"/>
    <property type="protein sequence ID" value="AT5G62165.3"/>
    <property type="gene ID" value="AT5G62165"/>
</dbReference>
<dbReference type="EnsemblPlants" id="AT5G62165.4">
    <molecule id="Q9FIS1-2"/>
    <property type="protein sequence ID" value="AT5G62165.4"/>
    <property type="gene ID" value="AT5G62165"/>
</dbReference>
<dbReference type="GeneID" id="836337"/>
<dbReference type="Gramene" id="AT5G62165.1">
    <molecule id="Q9FIS1-1"/>
    <property type="protein sequence ID" value="AT5G62165.1"/>
    <property type="gene ID" value="AT5G62165"/>
</dbReference>
<dbReference type="Gramene" id="AT5G62165.10">
    <molecule id="Q9FIS1-2"/>
    <property type="protein sequence ID" value="AT5G62165.10"/>
    <property type="gene ID" value="AT5G62165"/>
</dbReference>
<dbReference type="Gramene" id="AT5G62165.2">
    <molecule id="Q9FIS1-1"/>
    <property type="protein sequence ID" value="AT5G62165.2"/>
    <property type="gene ID" value="AT5G62165"/>
</dbReference>
<dbReference type="Gramene" id="AT5G62165.3">
    <molecule id="Q9FIS1-1"/>
    <property type="protein sequence ID" value="AT5G62165.3"/>
    <property type="gene ID" value="AT5G62165"/>
</dbReference>
<dbReference type="Gramene" id="AT5G62165.4">
    <molecule id="Q9FIS1-2"/>
    <property type="protein sequence ID" value="AT5G62165.4"/>
    <property type="gene ID" value="AT5G62165"/>
</dbReference>
<dbReference type="KEGG" id="ath:AT5G62165"/>
<dbReference type="Araport" id="AT5G62165"/>
<dbReference type="TAIR" id="AT5G62165">
    <property type="gene designation" value="AGL42"/>
</dbReference>
<dbReference type="eggNOG" id="KOG0014">
    <property type="taxonomic scope" value="Eukaryota"/>
</dbReference>
<dbReference type="InParanoid" id="Q9FIS1"/>
<dbReference type="OMA" id="HTECGAR"/>
<dbReference type="OrthoDB" id="1898716at2759"/>
<dbReference type="PhylomeDB" id="Q9FIS1"/>
<dbReference type="PRO" id="PR:Q9FIS1"/>
<dbReference type="Proteomes" id="UP000006548">
    <property type="component" value="Chromosome 5"/>
</dbReference>
<dbReference type="ExpressionAtlas" id="Q9FIS1">
    <property type="expression patterns" value="baseline and differential"/>
</dbReference>
<dbReference type="GO" id="GO:0005634">
    <property type="term" value="C:nucleus"/>
    <property type="evidence" value="ECO:0007669"/>
    <property type="project" value="UniProtKB-SubCell"/>
</dbReference>
<dbReference type="GO" id="GO:0003700">
    <property type="term" value="F:DNA-binding transcription factor activity"/>
    <property type="evidence" value="ECO:0000250"/>
    <property type="project" value="TAIR"/>
</dbReference>
<dbReference type="GO" id="GO:0046983">
    <property type="term" value="F:protein dimerization activity"/>
    <property type="evidence" value="ECO:0007669"/>
    <property type="project" value="InterPro"/>
</dbReference>
<dbReference type="GO" id="GO:0000977">
    <property type="term" value="F:RNA polymerase II transcription regulatory region sequence-specific DNA binding"/>
    <property type="evidence" value="ECO:0007669"/>
    <property type="project" value="InterPro"/>
</dbReference>
<dbReference type="GO" id="GO:0009838">
    <property type="term" value="P:abscission"/>
    <property type="evidence" value="ECO:0000315"/>
    <property type="project" value="TAIR"/>
</dbReference>
<dbReference type="GO" id="GO:0030154">
    <property type="term" value="P:cell differentiation"/>
    <property type="evidence" value="ECO:0007669"/>
    <property type="project" value="UniProtKB-KW"/>
</dbReference>
<dbReference type="GO" id="GO:0080187">
    <property type="term" value="P:floral organ senescence"/>
    <property type="evidence" value="ECO:0000315"/>
    <property type="project" value="TAIR"/>
</dbReference>
<dbReference type="GO" id="GO:0010150">
    <property type="term" value="P:leaf senescence"/>
    <property type="evidence" value="ECO:0000315"/>
    <property type="project" value="TAIR"/>
</dbReference>
<dbReference type="GO" id="GO:0045944">
    <property type="term" value="P:positive regulation of transcription by RNA polymerase II"/>
    <property type="evidence" value="ECO:0007669"/>
    <property type="project" value="InterPro"/>
</dbReference>
<dbReference type="GO" id="GO:0009909">
    <property type="term" value="P:regulation of flower development"/>
    <property type="evidence" value="ECO:0000315"/>
    <property type="project" value="TAIR"/>
</dbReference>
<dbReference type="CDD" id="cd00265">
    <property type="entry name" value="MADS_MEF2_like"/>
    <property type="match status" value="1"/>
</dbReference>
<dbReference type="FunFam" id="3.40.1810.10:FF:000012">
    <property type="entry name" value="MADS-box protein SOC1"/>
    <property type="match status" value="1"/>
</dbReference>
<dbReference type="Gene3D" id="3.40.1810.10">
    <property type="entry name" value="Transcription factor, MADS-box"/>
    <property type="match status" value="1"/>
</dbReference>
<dbReference type="InterPro" id="IPR050142">
    <property type="entry name" value="MADS-box/MEF2_TF"/>
</dbReference>
<dbReference type="InterPro" id="IPR033896">
    <property type="entry name" value="MEF2-like_N"/>
</dbReference>
<dbReference type="InterPro" id="IPR002487">
    <property type="entry name" value="TF_Kbox"/>
</dbReference>
<dbReference type="InterPro" id="IPR002100">
    <property type="entry name" value="TF_MADSbox"/>
</dbReference>
<dbReference type="InterPro" id="IPR036879">
    <property type="entry name" value="TF_MADSbox_sf"/>
</dbReference>
<dbReference type="PANTHER" id="PTHR48019">
    <property type="entry name" value="SERUM RESPONSE FACTOR HOMOLOG"/>
    <property type="match status" value="1"/>
</dbReference>
<dbReference type="Pfam" id="PF01486">
    <property type="entry name" value="K-box"/>
    <property type="match status" value="1"/>
</dbReference>
<dbReference type="Pfam" id="PF00319">
    <property type="entry name" value="SRF-TF"/>
    <property type="match status" value="1"/>
</dbReference>
<dbReference type="PRINTS" id="PR00404">
    <property type="entry name" value="MADSDOMAIN"/>
</dbReference>
<dbReference type="SMART" id="SM00432">
    <property type="entry name" value="MADS"/>
    <property type="match status" value="1"/>
</dbReference>
<dbReference type="SUPFAM" id="SSF55455">
    <property type="entry name" value="SRF-like"/>
    <property type="match status" value="1"/>
</dbReference>
<dbReference type="PROSITE" id="PS51297">
    <property type="entry name" value="K_BOX"/>
    <property type="match status" value="1"/>
</dbReference>
<dbReference type="PROSITE" id="PS00350">
    <property type="entry name" value="MADS_BOX_1"/>
    <property type="match status" value="1"/>
</dbReference>
<dbReference type="PROSITE" id="PS50066">
    <property type="entry name" value="MADS_BOX_2"/>
    <property type="match status" value="1"/>
</dbReference>
<proteinExistence type="evidence at protein level"/>
<gene>
    <name type="primary">AGL42</name>
    <name evidence="7" type="ordered locus">At5g62165</name>
    <name evidence="8" type="ORF">MTG10.20</name>
</gene>
<comment type="function">
    <text evidence="4 5">MADS-box transcription factor that acts with AGL71 and AGL72 in the control of flowering time. Promotes flowering at the shoot apical and axillary meristems. Seems to act through a gibberellin-dependent pathway. Interacts genetically with SOC1 and its expression is directly regulated by SOC1 (PubMed:21609362). Plays a role in controlling flower organ senescence and abscission by repressing ethylene responses and regulating the expression of BOP2 and IDA (PubMed:21689171).</text>
</comment>
<comment type="interaction">
    <interactant intactId="EBI-622017">
        <id>Q9FIS1</id>
    </interactant>
    <interactant intactId="EBI-621986">
        <id>Q9SZJ6</id>
        <label>AGL21</label>
    </interactant>
    <organismsDiffer>false</organismsDiffer>
    <experiments>4</experiments>
</comment>
<comment type="subcellular location">
    <subcellularLocation>
        <location evidence="1">Nucleus</location>
    </subcellularLocation>
</comment>
<comment type="alternative products">
    <event type="alternative splicing"/>
    <isoform>
        <id>Q9FIS1-1</id>
        <name>1</name>
        <sequence type="displayed"/>
    </isoform>
    <isoform>
        <id>Q9FIS1-2</id>
        <name>2</name>
        <sequence type="described" ref="VSP_058213"/>
    </isoform>
</comment>
<comment type="tissue specificity">
    <text evidence="3 5">Expressed in quiescent center (QC) cells of root tips (PubMed:18162590, PubMed:21689171). Expressed at the base of the petiole of cotyledons and leaves, in flower buds, petals, sepals and abscission zone of flowers and siliques.</text>
</comment>
<comment type="developmental stage">
    <text evidence="4">Expressed in the shoot apical meristem (SAM) during the vegetative phase and the floral transition. After floral transition, expressed in apical meristem (AM), inflorescence meristem (IM) and floral primordia.</text>
</comment>
<comment type="disruption phenotype">
    <text evidence="4">No visible phenotype under normal growth conditions.</text>
</comment>
<comment type="miscellaneous">
    <text evidence="5">Plants over-expressing AGL42 have a significant delay of leaf and flower senescence and a deficiency in flower abscission.</text>
</comment>
<accession>Q9FIS1</accession>
<accession>C0Z253</accession>
<reference key="1">
    <citation type="journal article" date="2003" name="Plant Cell">
        <title>Molecular and phylogenetic analyses of the complete MADS-box transcription factor family in Arabidopsis: new openings to the MADS world.</title>
        <authorList>
            <person name="Parenicova L."/>
            <person name="de Folter S."/>
            <person name="Kieffer M."/>
            <person name="Horner D.S."/>
            <person name="Favalli C."/>
            <person name="Busscher J."/>
            <person name="Cook H.E."/>
            <person name="Ingram R.M."/>
            <person name="Kater M.M."/>
            <person name="Davies B."/>
            <person name="Angenent G.C."/>
            <person name="Colombo L."/>
        </authorList>
    </citation>
    <scope>NUCLEOTIDE SEQUENCE [MRNA] (ISOFORM 1)</scope>
    <source>
        <strain>cv. Columbia</strain>
        <tissue>Flower</tissue>
    </source>
</reference>
<reference key="2">
    <citation type="journal article" date="1998" name="DNA Res.">
        <title>Structural analysis of Arabidopsis thaliana chromosome 5. VII. Sequence features of the regions of 1,013,767 bp covered by sixteen physically assigned P1 and TAC clones.</title>
        <authorList>
            <person name="Nakamura Y."/>
            <person name="Sato S."/>
            <person name="Asamizu E."/>
            <person name="Kaneko T."/>
            <person name="Kotani H."/>
            <person name="Miyajima N."/>
            <person name="Tabata S."/>
        </authorList>
    </citation>
    <scope>NUCLEOTIDE SEQUENCE [LARGE SCALE GENOMIC DNA]</scope>
    <source>
        <strain>cv. Columbia</strain>
    </source>
</reference>
<reference key="3">
    <citation type="journal article" date="2017" name="Plant J.">
        <title>Araport11: a complete reannotation of the Arabidopsis thaliana reference genome.</title>
        <authorList>
            <person name="Cheng C.Y."/>
            <person name="Krishnakumar V."/>
            <person name="Chan A.P."/>
            <person name="Thibaud-Nissen F."/>
            <person name="Schobel S."/>
            <person name="Town C.D."/>
        </authorList>
    </citation>
    <scope>GENOME REANNOTATION</scope>
    <source>
        <strain>cv. Columbia</strain>
    </source>
</reference>
<reference key="4">
    <citation type="journal article" date="2003" name="Science">
        <title>Empirical analysis of transcriptional activity in the Arabidopsis genome.</title>
        <authorList>
            <person name="Yamada K."/>
            <person name="Lim J."/>
            <person name="Dale J.M."/>
            <person name="Chen H."/>
            <person name="Shinn P."/>
            <person name="Palm C.J."/>
            <person name="Southwick A.M."/>
            <person name="Wu H.C."/>
            <person name="Kim C.J."/>
            <person name="Nguyen M."/>
            <person name="Pham P.K."/>
            <person name="Cheuk R.F."/>
            <person name="Karlin-Newmann G."/>
            <person name="Liu S.X."/>
            <person name="Lam B."/>
            <person name="Sakano H."/>
            <person name="Wu T."/>
            <person name="Yu G."/>
            <person name="Miranda M."/>
            <person name="Quach H.L."/>
            <person name="Tripp M."/>
            <person name="Chang C.H."/>
            <person name="Lee J.M."/>
            <person name="Toriumi M.J."/>
            <person name="Chan M.M."/>
            <person name="Tang C.C."/>
            <person name="Onodera C.S."/>
            <person name="Deng J.M."/>
            <person name="Akiyama K."/>
            <person name="Ansari Y."/>
            <person name="Arakawa T."/>
            <person name="Banh J."/>
            <person name="Banno F."/>
            <person name="Bowser L."/>
            <person name="Brooks S.Y."/>
            <person name="Carninci P."/>
            <person name="Chao Q."/>
            <person name="Choy N."/>
            <person name="Enju A."/>
            <person name="Goldsmith A.D."/>
            <person name="Gurjal M."/>
            <person name="Hansen N.F."/>
            <person name="Hayashizaki Y."/>
            <person name="Johnson-Hopson C."/>
            <person name="Hsuan V.W."/>
            <person name="Iida K."/>
            <person name="Karnes M."/>
            <person name="Khan S."/>
            <person name="Koesema E."/>
            <person name="Ishida J."/>
            <person name="Jiang P.X."/>
            <person name="Jones T."/>
            <person name="Kawai J."/>
            <person name="Kamiya A."/>
            <person name="Meyers C."/>
            <person name="Nakajima M."/>
            <person name="Narusaka M."/>
            <person name="Seki M."/>
            <person name="Sakurai T."/>
            <person name="Satou M."/>
            <person name="Tamse R."/>
            <person name="Vaysberg M."/>
            <person name="Wallender E.K."/>
            <person name="Wong C."/>
            <person name="Yamamura Y."/>
            <person name="Yuan S."/>
            <person name="Shinozaki K."/>
            <person name="Davis R.W."/>
            <person name="Theologis A."/>
            <person name="Ecker J.R."/>
        </authorList>
    </citation>
    <scope>NUCLEOTIDE SEQUENCE [LARGE SCALE MRNA] (ISOFORM 1)</scope>
    <source>
        <strain>cv. Columbia</strain>
    </source>
</reference>
<reference key="5">
    <citation type="journal article" date="2009" name="DNA Res.">
        <title>Analysis of multiple occurrences of alternative splicing events in Arabidopsis thaliana using novel sequenced full-length cDNAs.</title>
        <authorList>
            <person name="Iida K."/>
            <person name="Fukami-Kobayashi K."/>
            <person name="Toyoda A."/>
            <person name="Sakaki Y."/>
            <person name="Kobayashi M."/>
            <person name="Seki M."/>
            <person name="Shinozaki K."/>
        </authorList>
    </citation>
    <scope>NUCLEOTIDE SEQUENCE [LARGE SCALE MRNA] (ISOFORM 2)</scope>
    <source>
        <strain>cv. Columbia</strain>
    </source>
</reference>
<reference key="6">
    <citation type="journal article" date="2008" name="Plant Physiol.">
        <title>Specificity of RCN1-mediated protein phosphatase 2A regulation in meristem organization and stress response in roots.</title>
        <authorList>
            <person name="Blakeslee J.J."/>
            <person name="Zhou H.W."/>
            <person name="Heath J.T."/>
            <person name="Skottke K.R."/>
            <person name="Barrios J.A."/>
            <person name="Liu S.Y."/>
            <person name="DeLong A."/>
        </authorList>
    </citation>
    <scope>TISSUE SPECIFICITY</scope>
</reference>
<reference key="7">
    <citation type="journal article" date="2011" name="Plant J.">
        <title>The Arabidopsis SOC1-like genes AGL42, AGL71 and AGL72 promote flowering in the shoot apical and axillary meristems.</title>
        <authorList>
            <person name="Dorca-Fornell C."/>
            <person name="Gregis V."/>
            <person name="Grandi V."/>
            <person name="Coupland G."/>
            <person name="Colombo L."/>
            <person name="Kater M.M."/>
        </authorList>
    </citation>
    <scope>FUNCTION</scope>
    <scope>DEVELOPMENTAL STAGE</scope>
    <scope>DISRUPTION PHENOTYPE</scope>
</reference>
<reference key="8">
    <citation type="journal article" date="2011" name="Plant J.">
        <title>The MADS box gene, FOREVER YOUNG FLOWER, acts as a repressor controlling floral organ senescence and abscission in Arabidopsis.</title>
        <authorList>
            <person name="Chen M.K."/>
            <person name="Hsu W.H."/>
            <person name="Lee P.F."/>
            <person name="Thiruvengadam M."/>
            <person name="Chen H.I."/>
            <person name="Yang C.H."/>
        </authorList>
    </citation>
    <scope>FUNCTION</scope>
    <scope>TISSUE SPECIFICITY</scope>
</reference>